<reference key="1">
    <citation type="journal article" date="2010" name="BMC Genomics">
        <title>From array-based hybridization of Helicobacter pylori isolates to the complete genome sequence of an isolate associated with MALT lymphoma.</title>
        <authorList>
            <person name="Thiberge J.M."/>
            <person name="Boursaux-Eude C."/>
            <person name="Lehours P."/>
            <person name="Dillies M.A."/>
            <person name="Creno S."/>
            <person name="Coppee J.Y."/>
            <person name="Rouy Z."/>
            <person name="Lajus A."/>
            <person name="Ma L."/>
            <person name="Burucoa C."/>
            <person name="Ruskone-Foumestraux A."/>
            <person name="Courillon-Mallet A."/>
            <person name="De Reuse H."/>
            <person name="Boneca I.G."/>
            <person name="Lamarque D."/>
            <person name="Megraud F."/>
            <person name="Delchier J.C."/>
            <person name="Medigue C."/>
            <person name="Bouchier C."/>
            <person name="Labigne A."/>
            <person name="Raymond J."/>
        </authorList>
    </citation>
    <scope>NUCLEOTIDE SEQUENCE [LARGE SCALE GENOMIC DNA]</scope>
    <source>
        <strain>B38</strain>
    </source>
</reference>
<proteinExistence type="inferred from homology"/>
<keyword id="KW-0963">Cytoplasm</keyword>
<keyword id="KW-0489">Methyltransferase</keyword>
<keyword id="KW-0698">rRNA processing</keyword>
<keyword id="KW-0949">S-adenosyl-L-methionine</keyword>
<keyword id="KW-0808">Transferase</keyword>
<name>RSMH_HELPB</name>
<dbReference type="EC" id="2.1.1.199" evidence="1"/>
<dbReference type="EMBL" id="FM991728">
    <property type="protein sequence ID" value="CAX29192.1"/>
    <property type="molecule type" value="Genomic_DNA"/>
</dbReference>
<dbReference type="RefSeq" id="WP_001155546.1">
    <property type="nucleotide sequence ID" value="NC_012973.1"/>
</dbReference>
<dbReference type="SMR" id="C7BZ94"/>
<dbReference type="KEGG" id="hpb:HELPY_0659"/>
<dbReference type="HOGENOM" id="CLU_038422_3_0_7"/>
<dbReference type="GO" id="GO:0005737">
    <property type="term" value="C:cytoplasm"/>
    <property type="evidence" value="ECO:0007669"/>
    <property type="project" value="UniProtKB-SubCell"/>
</dbReference>
<dbReference type="GO" id="GO:0071424">
    <property type="term" value="F:rRNA (cytosine-N4-)-methyltransferase activity"/>
    <property type="evidence" value="ECO:0007669"/>
    <property type="project" value="UniProtKB-UniRule"/>
</dbReference>
<dbReference type="GO" id="GO:0070475">
    <property type="term" value="P:rRNA base methylation"/>
    <property type="evidence" value="ECO:0007669"/>
    <property type="project" value="UniProtKB-UniRule"/>
</dbReference>
<dbReference type="Gene3D" id="1.10.150.170">
    <property type="entry name" value="Putative methyltransferase TM0872, insert domain"/>
    <property type="match status" value="1"/>
</dbReference>
<dbReference type="Gene3D" id="3.40.50.150">
    <property type="entry name" value="Vaccinia Virus protein VP39"/>
    <property type="match status" value="1"/>
</dbReference>
<dbReference type="HAMAP" id="MF_01007">
    <property type="entry name" value="16SrRNA_methyltr_H"/>
    <property type="match status" value="1"/>
</dbReference>
<dbReference type="InterPro" id="IPR002903">
    <property type="entry name" value="RsmH"/>
</dbReference>
<dbReference type="InterPro" id="IPR023397">
    <property type="entry name" value="SAM-dep_MeTrfase_MraW_recog"/>
</dbReference>
<dbReference type="InterPro" id="IPR029063">
    <property type="entry name" value="SAM-dependent_MTases_sf"/>
</dbReference>
<dbReference type="NCBIfam" id="TIGR00006">
    <property type="entry name" value="16S rRNA (cytosine(1402)-N(4))-methyltransferase RsmH"/>
    <property type="match status" value="1"/>
</dbReference>
<dbReference type="PANTHER" id="PTHR11265:SF0">
    <property type="entry name" value="12S RRNA N4-METHYLCYTIDINE METHYLTRANSFERASE"/>
    <property type="match status" value="1"/>
</dbReference>
<dbReference type="PANTHER" id="PTHR11265">
    <property type="entry name" value="S-ADENOSYL-METHYLTRANSFERASE MRAW"/>
    <property type="match status" value="1"/>
</dbReference>
<dbReference type="Pfam" id="PF01795">
    <property type="entry name" value="Methyltransf_5"/>
    <property type="match status" value="1"/>
</dbReference>
<dbReference type="PIRSF" id="PIRSF004486">
    <property type="entry name" value="MraW"/>
    <property type="match status" value="1"/>
</dbReference>
<dbReference type="SUPFAM" id="SSF81799">
    <property type="entry name" value="Putative methyltransferase TM0872, insert domain"/>
    <property type="match status" value="1"/>
</dbReference>
<dbReference type="SUPFAM" id="SSF53335">
    <property type="entry name" value="S-adenosyl-L-methionine-dependent methyltransferases"/>
    <property type="match status" value="1"/>
</dbReference>
<comment type="function">
    <text evidence="1">Specifically methylates the N4 position of cytidine in position 1402 (C1402) of 16S rRNA.</text>
</comment>
<comment type="catalytic activity">
    <reaction evidence="1">
        <text>cytidine(1402) in 16S rRNA + S-adenosyl-L-methionine = N(4)-methylcytidine(1402) in 16S rRNA + S-adenosyl-L-homocysteine + H(+)</text>
        <dbReference type="Rhea" id="RHEA:42928"/>
        <dbReference type="Rhea" id="RHEA-COMP:10286"/>
        <dbReference type="Rhea" id="RHEA-COMP:10287"/>
        <dbReference type="ChEBI" id="CHEBI:15378"/>
        <dbReference type="ChEBI" id="CHEBI:57856"/>
        <dbReference type="ChEBI" id="CHEBI:59789"/>
        <dbReference type="ChEBI" id="CHEBI:74506"/>
        <dbReference type="ChEBI" id="CHEBI:82748"/>
        <dbReference type="EC" id="2.1.1.199"/>
    </reaction>
</comment>
<comment type="subcellular location">
    <subcellularLocation>
        <location evidence="1">Cytoplasm</location>
    </subcellularLocation>
</comment>
<comment type="similarity">
    <text evidence="1">Belongs to the methyltransferase superfamily. RsmH family.</text>
</comment>
<organism>
    <name type="scientific">Helicobacter pylori (strain B38)</name>
    <dbReference type="NCBI Taxonomy" id="592205"/>
    <lineage>
        <taxon>Bacteria</taxon>
        <taxon>Pseudomonadati</taxon>
        <taxon>Campylobacterota</taxon>
        <taxon>Epsilonproteobacteria</taxon>
        <taxon>Campylobacterales</taxon>
        <taxon>Helicobacteraceae</taxon>
        <taxon>Helicobacter</taxon>
    </lineage>
</organism>
<gene>
    <name evidence="1" type="primary">rsmH</name>
    <name type="synonym">mraW</name>
    <name type="ordered locus">HELPY_0659</name>
</gene>
<protein>
    <recommendedName>
        <fullName evidence="1">Ribosomal RNA small subunit methyltransferase H</fullName>
        <ecNumber evidence="1">2.1.1.199</ecNumber>
    </recommendedName>
    <alternativeName>
        <fullName evidence="1">16S rRNA m(4)C1402 methyltransferase</fullName>
    </alternativeName>
    <alternativeName>
        <fullName evidence="1">rRNA (cytosine-N(4)-)-methyltransferase RsmH</fullName>
    </alternativeName>
</protein>
<evidence type="ECO:0000255" key="1">
    <source>
        <dbReference type="HAMAP-Rule" id="MF_01007"/>
    </source>
</evidence>
<accession>C7BZ94</accession>
<feature type="chain" id="PRO_0000386926" description="Ribosomal RNA small subunit methyltransferase H">
    <location>
        <begin position="1"/>
        <end position="308"/>
    </location>
</feature>
<feature type="binding site" evidence="1">
    <location>
        <begin position="36"/>
        <end position="38"/>
    </location>
    <ligand>
        <name>S-adenosyl-L-methionine</name>
        <dbReference type="ChEBI" id="CHEBI:59789"/>
    </ligand>
</feature>
<feature type="binding site" evidence="1">
    <location>
        <position position="55"/>
    </location>
    <ligand>
        <name>S-adenosyl-L-methionine</name>
        <dbReference type="ChEBI" id="CHEBI:59789"/>
    </ligand>
</feature>
<feature type="binding site" evidence="1">
    <location>
        <position position="86"/>
    </location>
    <ligand>
        <name>S-adenosyl-L-methionine</name>
        <dbReference type="ChEBI" id="CHEBI:59789"/>
    </ligand>
</feature>
<feature type="binding site" evidence="1">
    <location>
        <position position="103"/>
    </location>
    <ligand>
        <name>S-adenosyl-L-methionine</name>
        <dbReference type="ChEBI" id="CHEBI:59789"/>
    </ligand>
</feature>
<feature type="binding site" evidence="1">
    <location>
        <position position="110"/>
    </location>
    <ligand>
        <name>S-adenosyl-L-methionine</name>
        <dbReference type="ChEBI" id="CHEBI:59789"/>
    </ligand>
</feature>
<sequence length="308" mass="34973">MQEIENLHQSVLLQEVLQAFTPLEEGVLIDCTLGLGGHSKALLSQKPHLKLIGIDKDKFAQEIAKERLKAFEGRYNLLSGGFAKRFKEALETHNKEIKGVLVDLGVSSLQLDDDDRGFNFHSHALDMRMDLKSDLNAQKVINSYPVIALEKIFRDYGEIKEYKKIAHKIAERRTKKPFKDAKDLSEFLSSFSKNKKIHPATLVFQAVRIEVNSELEELKEFLQCARNLKGAILCVISFHSLEDGLVKNAFKDYAKNCICDPLSFKCACSNNHALGEILTKKPITPSPEEIKNNRRSRSAKMRVFKFKP</sequence>